<organism>
    <name type="scientific">Bos taurus</name>
    <name type="common">Bovine</name>
    <dbReference type="NCBI Taxonomy" id="9913"/>
    <lineage>
        <taxon>Eukaryota</taxon>
        <taxon>Metazoa</taxon>
        <taxon>Chordata</taxon>
        <taxon>Craniata</taxon>
        <taxon>Vertebrata</taxon>
        <taxon>Euteleostomi</taxon>
        <taxon>Mammalia</taxon>
        <taxon>Eutheria</taxon>
        <taxon>Laurasiatheria</taxon>
        <taxon>Artiodactyla</taxon>
        <taxon>Ruminantia</taxon>
        <taxon>Pecora</taxon>
        <taxon>Bovidae</taxon>
        <taxon>Bovinae</taxon>
        <taxon>Bos</taxon>
    </lineage>
</organism>
<keyword id="KW-0903">Direct protein sequencing</keyword>
<keyword id="KW-1015">Disulfide bond</keyword>
<keyword id="KW-0325">Glycoprotein</keyword>
<keyword id="KW-0495">Mineral balance</keyword>
<keyword id="KW-0597">Phosphoprotein</keyword>
<keyword id="KW-1185">Reference proteome</keyword>
<keyword id="KW-0677">Repeat</keyword>
<keyword id="KW-0964">Secreted</keyword>
<keyword id="KW-0732">Signal</keyword>
<comment type="function">
    <text>Promotes endocytosis, possesses opsonic properties and influences the mineral phase of bone. Suggested to have lymphocyte stimulating properties, lipid binding capability and to bind thyroid hormone.</text>
</comment>
<comment type="interaction">
    <interactant intactId="EBI-9396660">
        <id>P12763</id>
    </interactant>
    <interactant intactId="EBI-1170392">
        <id>P17931</id>
        <label>LGALS3</label>
    </interactant>
    <organismsDiffer>true</organismsDiffer>
    <experiments>2</experiments>
</comment>
<comment type="subcellular location">
    <subcellularLocation>
        <location>Secreted</location>
    </subcellularLocation>
</comment>
<comment type="tissue specificity">
    <text>Liver and bone.</text>
</comment>
<comment type="PTM">
    <text evidence="1">Phosphorylated by FAM20C in the extracellular medium.</text>
</comment>
<comment type="similarity">
    <text evidence="4">Belongs to the fetuin family.</text>
</comment>
<dbReference type="EMBL" id="X16577">
    <property type="protein sequence ID" value="CAA34596.1"/>
    <property type="molecule type" value="mRNA"/>
</dbReference>
<dbReference type="EMBL" id="BC147948">
    <property type="protein sequence ID" value="AAI47949.1"/>
    <property type="molecule type" value="mRNA"/>
</dbReference>
<dbReference type="PIR" id="A35714">
    <property type="entry name" value="A35714"/>
</dbReference>
<dbReference type="RefSeq" id="NP_776409.1">
    <property type="nucleotide sequence ID" value="NM_173984.3"/>
</dbReference>
<dbReference type="SMR" id="P12763"/>
<dbReference type="FunCoup" id="P12763">
    <property type="interactions" value="347"/>
</dbReference>
<dbReference type="IntAct" id="P12763">
    <property type="interactions" value="2"/>
</dbReference>
<dbReference type="STRING" id="9913.ENSBTAP00000000673"/>
<dbReference type="MEROPS" id="I25.020"/>
<dbReference type="MEROPS" id="I25.021"/>
<dbReference type="GlyConnect" id="22">
    <property type="glycosylation" value="60 N-Linked glycans (3 sites), 13 O-Linked glycans (6 sites)"/>
</dbReference>
<dbReference type="GlyCosmos" id="P12763">
    <property type="glycosylation" value="9 sites, 69 glycans"/>
</dbReference>
<dbReference type="GlyGen" id="P12763">
    <property type="glycosylation" value="10 sites, 58 N-linked glycans (4 sites), 12 O-linked glycans (7 sites)"/>
</dbReference>
<dbReference type="iPTMnet" id="P12763"/>
<dbReference type="PaxDb" id="9913-ENSBTAP00000000673"/>
<dbReference type="PeptideAtlas" id="P12763"/>
<dbReference type="GeneID" id="280988"/>
<dbReference type="KEGG" id="bta:280988"/>
<dbReference type="CTD" id="197"/>
<dbReference type="VEuPathDB" id="HostDB:ENSBTAG00000000522"/>
<dbReference type="eggNOG" id="ENOG502RYRI">
    <property type="taxonomic scope" value="Eukaryota"/>
</dbReference>
<dbReference type="HOGENOM" id="CLU_052519_0_0_1"/>
<dbReference type="InParanoid" id="P12763"/>
<dbReference type="OMA" id="KVWPRQP"/>
<dbReference type="OrthoDB" id="8780871at2759"/>
<dbReference type="TreeFam" id="TF333729"/>
<dbReference type="Reactome" id="R-BTA-114608">
    <property type="pathway name" value="Platelet degranulation"/>
</dbReference>
<dbReference type="Reactome" id="R-BTA-381426">
    <property type="pathway name" value="Regulation of Insulin-like Growth Factor (IGF) transport and uptake by Insulin-like Growth Factor Binding Proteins (IGFBPs)"/>
</dbReference>
<dbReference type="Reactome" id="R-BTA-6798695">
    <property type="pathway name" value="Neutrophil degranulation"/>
</dbReference>
<dbReference type="Reactome" id="R-BTA-8957275">
    <property type="pathway name" value="Post-translational protein phosphorylation"/>
</dbReference>
<dbReference type="Proteomes" id="UP000009136">
    <property type="component" value="Chromosome 1"/>
</dbReference>
<dbReference type="Bgee" id="ENSBTAG00000000522">
    <property type="expression patterns" value="Expressed in liver and 64 other cell types or tissues"/>
</dbReference>
<dbReference type="GO" id="GO:0031012">
    <property type="term" value="C:extracellular matrix"/>
    <property type="evidence" value="ECO:0000318"/>
    <property type="project" value="GO_Central"/>
</dbReference>
<dbReference type="GO" id="GO:0065010">
    <property type="term" value="C:extracellular membrane-bounded organelle"/>
    <property type="evidence" value="ECO:0000314"/>
    <property type="project" value="AgBase"/>
</dbReference>
<dbReference type="GO" id="GO:0005576">
    <property type="term" value="C:extracellular region"/>
    <property type="evidence" value="ECO:0000318"/>
    <property type="project" value="GO_Central"/>
</dbReference>
<dbReference type="GO" id="GO:0005615">
    <property type="term" value="C:extracellular space"/>
    <property type="evidence" value="ECO:0007669"/>
    <property type="project" value="InterPro"/>
</dbReference>
<dbReference type="GO" id="GO:0005886">
    <property type="term" value="C:plasma membrane"/>
    <property type="evidence" value="ECO:0000304"/>
    <property type="project" value="AgBase"/>
</dbReference>
<dbReference type="GO" id="GO:0031982">
    <property type="term" value="C:vesicle"/>
    <property type="evidence" value="ECO:0000314"/>
    <property type="project" value="AgBase"/>
</dbReference>
<dbReference type="GO" id="GO:0004869">
    <property type="term" value="F:cysteine-type endopeptidase inhibitor activity"/>
    <property type="evidence" value="ECO:0007669"/>
    <property type="project" value="InterPro"/>
</dbReference>
<dbReference type="GO" id="GO:0004866">
    <property type="term" value="F:endopeptidase inhibitor activity"/>
    <property type="evidence" value="ECO:0000318"/>
    <property type="project" value="GO_Central"/>
</dbReference>
<dbReference type="GO" id="GO:0006953">
    <property type="term" value="P:acute-phase response"/>
    <property type="evidence" value="ECO:0000250"/>
    <property type="project" value="UniProtKB"/>
</dbReference>
<dbReference type="GO" id="GO:0030502">
    <property type="term" value="P:negative regulation of bone mineralization"/>
    <property type="evidence" value="ECO:0000250"/>
    <property type="project" value="UniProtKB"/>
</dbReference>
<dbReference type="GO" id="GO:0050766">
    <property type="term" value="P:positive regulation of phagocytosis"/>
    <property type="evidence" value="ECO:0000250"/>
    <property type="project" value="UniProtKB"/>
</dbReference>
<dbReference type="GO" id="GO:0050727">
    <property type="term" value="P:regulation of inflammatory response"/>
    <property type="evidence" value="ECO:0000250"/>
    <property type="project" value="UniProtKB"/>
</dbReference>
<dbReference type="CDD" id="cd00042">
    <property type="entry name" value="CY"/>
    <property type="match status" value="2"/>
</dbReference>
<dbReference type="FunFam" id="3.10.450.10:FF:000010">
    <property type="entry name" value="Alpha-2-HS-glycoprotein"/>
    <property type="match status" value="1"/>
</dbReference>
<dbReference type="FunFam" id="3.10.450.10:FF:000009">
    <property type="entry name" value="Alpha-2-HS-glycoprotein 2"/>
    <property type="match status" value="1"/>
</dbReference>
<dbReference type="Gene3D" id="3.10.450.10">
    <property type="match status" value="2"/>
</dbReference>
<dbReference type="InterPro" id="IPR000010">
    <property type="entry name" value="Cystatin_dom"/>
</dbReference>
<dbReference type="InterPro" id="IPR025760">
    <property type="entry name" value="Cystatin_Fetuin_A"/>
</dbReference>
<dbReference type="InterPro" id="IPR046350">
    <property type="entry name" value="Cystatin_sf"/>
</dbReference>
<dbReference type="InterPro" id="IPR050735">
    <property type="entry name" value="Kininogen_Fetuin_HRG"/>
</dbReference>
<dbReference type="InterPro" id="IPR001363">
    <property type="entry name" value="Prot_inh_fetuin_CS"/>
</dbReference>
<dbReference type="PANTHER" id="PTHR13814:SF6">
    <property type="entry name" value="ALPHA-2-HS-GLYCOPROTEIN"/>
    <property type="match status" value="1"/>
</dbReference>
<dbReference type="PANTHER" id="PTHR13814">
    <property type="entry name" value="FETUIN"/>
    <property type="match status" value="1"/>
</dbReference>
<dbReference type="Pfam" id="PF00031">
    <property type="entry name" value="Cystatin"/>
    <property type="match status" value="1"/>
</dbReference>
<dbReference type="SMART" id="SM00043">
    <property type="entry name" value="CY"/>
    <property type="match status" value="2"/>
</dbReference>
<dbReference type="SUPFAM" id="SSF54403">
    <property type="entry name" value="Cystatin/monellin"/>
    <property type="match status" value="2"/>
</dbReference>
<dbReference type="PROSITE" id="PS51529">
    <property type="entry name" value="CYSTATIN_FETUIN_A"/>
    <property type="match status" value="2"/>
</dbReference>
<dbReference type="PROSITE" id="PS01254">
    <property type="entry name" value="FETUIN_1"/>
    <property type="match status" value="1"/>
</dbReference>
<dbReference type="PROSITE" id="PS01255">
    <property type="entry name" value="FETUIN_2"/>
    <property type="match status" value="1"/>
</dbReference>
<accession>P12763</accession>
<accession>A6QLF7</accession>
<proteinExistence type="evidence at protein level"/>
<name>FETUA_BOVIN</name>
<gene>
    <name type="primary">AHSG</name>
    <name type="synonym">FETUA</name>
</gene>
<reference key="1">
    <citation type="journal article" date="1990" name="J. Biol. Chem.">
        <title>The complete cDNA and amino acid sequence of bovine fetuin. Its homology with alpha 2HS glycoprotein and relation to other members of the cystatin superfamily.</title>
        <authorList>
            <person name="Dziegielewska K.D."/>
            <person name="Brown W.M."/>
            <person name="Casey S.J."/>
            <person name="Christie D.L."/>
            <person name="Foreman R.C."/>
            <person name="Hill R.M."/>
            <person name="Saunders N.R."/>
        </authorList>
    </citation>
    <scope>NUCLEOTIDE SEQUENCE [MRNA]</scope>
    <source>
        <tissue>Liver</tissue>
    </source>
</reference>
<reference key="2">
    <citation type="submission" date="2007-06" db="EMBL/GenBank/DDBJ databases">
        <authorList>
            <consortium name="NIH - Mammalian Gene Collection (MGC) project"/>
        </authorList>
    </citation>
    <scope>NUCLEOTIDE SEQUENCE [LARGE SCALE MRNA]</scope>
    <source>
        <strain>Hereford</strain>
        <tissue>Fetal liver</tissue>
    </source>
</reference>
<reference key="3">
    <citation type="journal article" date="1987" name="FEBS Lett.">
        <title>Fetuin: the bovine homologue of human alpha 2HS glycoprotein.</title>
        <authorList>
            <person name="Christie D.L."/>
            <person name="Dziegielewska K.M."/>
            <person name="Hill R.M."/>
            <person name="Saunders N.R."/>
        </authorList>
    </citation>
    <scope>PROTEIN SEQUENCE OF 19-123 AND 188-243</scope>
</reference>
<reference key="4">
    <citation type="journal article" date="1981" name="Biochem. Biophys. Res. Commun.">
        <title>NH2-terminal sequence of calf fetuin.</title>
        <authorList>
            <person name="Alcaraz G."/>
            <person name="Marti J."/>
            <person name="Moinier D."/>
            <person name="Fougereau M."/>
        </authorList>
    </citation>
    <scope>PROTEIN SEQUENCE OF 19-62</scope>
</reference>
<reference key="5">
    <citation type="journal article" date="1988" name="J. Biol. Chem.">
        <title>The covalent structure of individual N-linked glycopeptides from ovomucoid and asialofetuin.</title>
        <authorList>
            <person name="Yet M.G."/>
            <person name="Chin C.C.Q."/>
            <person name="Wold F."/>
        </authorList>
    </citation>
    <scope>PROTEIN SEQUENCE OF 72-103 AND 144-187</scope>
    <scope>GLYCOSYLATION AT ASN-99; ASN-156 AND ASN-176</scope>
</reference>
<reference key="6">
    <citation type="book" date="1996" name="Techniques in glycobiology">
        <title>Identifying sites of glycosylation in proteins.</title>
        <editorList>
            <person name="Townsend R.R."/>
            <person name="Hotchkiss A.T. Jr."/>
        </editorList>
        <authorList>
            <person name="Pisano A."/>
            <person name="Jardine D.R."/>
            <person name="Packer N.H."/>
            <person name="Farnsworth V."/>
            <person name="Carson W."/>
            <person name="Cartier P."/>
            <person name="Redmond J.W."/>
            <person name="Williams K.L."/>
            <person name="Gooley A.A."/>
        </authorList>
    </citation>
    <scope>GLYCOSYLATION AT SER-271; THR-280; SER-282 AND SER-341</scope>
</reference>
<reference key="7">
    <citation type="journal article" date="2004" name="J. Proteome Res.">
        <title>A new strategy for identification of N-glycosylated proteins and unambiguous assignment of their glycosylation sites using HILIC enrichment and partial deglycosylation.</title>
        <authorList>
            <person name="Hagglund P."/>
            <person name="Bunkenborg J."/>
            <person name="Elortza F."/>
            <person name="Jensen O.N."/>
            <person name="Roepstorff P."/>
        </authorList>
    </citation>
    <scope>GLYCOSYLATION AT ASN-99; ASN-156 AND ASN-176</scope>
    <scope>IDENTIFICATION BY MASS SPECTROMETRY</scope>
</reference>
<reference key="8">
    <citation type="journal article" date="2009" name="Anal. Chem.">
        <title>Site-specific glycoprofiling of N-linked glycopeptides using MALDI-TOF MS: strong correlation between signal strength and glycoform quantities.</title>
        <authorList>
            <person name="Thaysen-Andersen M."/>
            <person name="Mysling S."/>
            <person name="Hojrup P."/>
        </authorList>
    </citation>
    <scope>GLYCOSYLATION AT ASN-99; ASN-156 AND ASN-176</scope>
</reference>
<reference key="9">
    <citation type="journal article" date="2009" name="Mol. Cell. Proteomics">
        <title>Affinity enrichment and characterization of mucin core-1 type glycopeptides from bovine serum.</title>
        <authorList>
            <person name="Darula Z."/>
            <person name="Medzihradszky K.F."/>
        </authorList>
    </citation>
    <scope>GLYCOSYLATION AT SER-296; THR-334 AND SER-341</scope>
    <scope>IDENTIFICATION BY MASS SPECTROMETRY</scope>
</reference>
<reference key="10">
    <citation type="journal article" date="2014" name="J. Chromatogr. A">
        <title>Identification of protein O-glycosylation site and corresponding glycans using liquid chromatography-tandem mass spectrometry via mapping accurate mass and retention time shift.</title>
        <authorList>
            <person name="Huang L.J."/>
            <person name="Lin J.H."/>
            <person name="Tsai J.H."/>
            <person name="Chu Y.Y."/>
            <person name="Chen Y.W."/>
            <person name="Chen S.L."/>
            <person name="Chen S.H."/>
        </authorList>
    </citation>
    <scope>GLYCOSYLATION AT SER-271; THR-280; SER-282; SER-296 AND SER-341</scope>
    <scope>PHOSPHORYLATION AT SER-138</scope>
    <scope>IDENTIFICATION BY MASS SPECTROMETRY</scope>
</reference>
<reference key="11">
    <citation type="journal article" date="2014" name="J. Proteomics">
        <title>Site-specific analysis of the O-glycosylation of bovine fetuin by electron-transfer dissociation mass spectrometry.</title>
        <authorList>
            <person name="Windwarder M."/>
            <person name="Altmann F."/>
        </authorList>
    </citation>
    <scope>GLYCOSYLATION AT ASN-99; ASN-156; ASN-176; SER-271; THR-280; SER-282; SER-296 AND SER-341</scope>
    <scope>PHOSPHORYLATION AT SER-138; SER-320; SER-323 AND SER-325</scope>
    <scope>IDENTIFICATION BY MASS SPECTROMETRY</scope>
</reference>
<evidence type="ECO:0000250" key="1">
    <source>
        <dbReference type="UniProtKB" id="P02765"/>
    </source>
</evidence>
<evidence type="ECO:0000250" key="2">
    <source>
        <dbReference type="UniProtKB" id="P24090"/>
    </source>
</evidence>
<evidence type="ECO:0000255" key="3"/>
<evidence type="ECO:0000255" key="4">
    <source>
        <dbReference type="PROSITE-ProRule" id="PRU00861"/>
    </source>
</evidence>
<evidence type="ECO:0000256" key="5">
    <source>
        <dbReference type="SAM" id="MobiDB-lite"/>
    </source>
</evidence>
<evidence type="ECO:0000269" key="6">
    <source>
    </source>
</evidence>
<evidence type="ECO:0000269" key="7">
    <source>
    </source>
</evidence>
<evidence type="ECO:0000269" key="8">
    <source>
    </source>
</evidence>
<evidence type="ECO:0000269" key="9">
    <source>
    </source>
</evidence>
<evidence type="ECO:0000269" key="10">
    <source>
    </source>
</evidence>
<evidence type="ECO:0000269" key="11">
    <source>
    </source>
</evidence>
<evidence type="ECO:0000269" key="12">
    <source>
    </source>
</evidence>
<evidence type="ECO:0000269" key="13">
    <source>
    </source>
</evidence>
<evidence type="ECO:0000269" key="14">
    <source ref="6"/>
</evidence>
<evidence type="ECO:0000305" key="15"/>
<sequence>MKSFVLLFCLAQLWGCHSIPLDPVAGYKEPACDDPDTEQAALAAVDYINKHLPRGYKHTLNQIDSVKVWPRRPTGEVYDIEIDTLETTCHVLDPTPLANCSVRQQTQHAVEGDCDIHVLKQDGQFSVLFTKCDSSPDSAEDVRKLCPDCPLLAPLNDSRVVHAVEVALATFNAESNGSYLQLVEISRAQFVPLPVSVSVEFAVAATDCIAKEVVDPTKCNLLAEKQYGFCKGSVIQKALGGEDVRVTCTLFQTQPVIPQPQPDGAEAEAPSAVPDAAGPTPSAAGPPVASVVVGPSVVAVPLPLHRAHYDLRHTFSGVASVESSSGEAFHVGKTPIVGQPSIPGGPVRLCPGRIRYFKI</sequence>
<feature type="signal peptide" evidence="9 13">
    <location>
        <begin position="1"/>
        <end position="18"/>
    </location>
</feature>
<feature type="chain" id="PRO_0000008885" description="Alpha-2-HS-glycoprotein">
    <location>
        <begin position="19"/>
        <end position="359"/>
    </location>
</feature>
<feature type="domain" description="Cystatin fetuin-A-type 1" evidence="4">
    <location>
        <begin position="27"/>
        <end position="133"/>
    </location>
</feature>
<feature type="domain" description="Cystatin fetuin-A-type 2" evidence="4">
    <location>
        <begin position="144"/>
        <end position="256"/>
    </location>
</feature>
<feature type="region of interest" description="Disordered" evidence="5">
    <location>
        <begin position="257"/>
        <end position="285"/>
    </location>
</feature>
<feature type="compositionally biased region" description="Low complexity" evidence="5">
    <location>
        <begin position="276"/>
        <end position="285"/>
    </location>
</feature>
<feature type="site" description="Cleavage; by trypsin" evidence="3">
    <location>
        <begin position="143"/>
        <end position="144"/>
    </location>
</feature>
<feature type="modified residue" description="Phosphoserine" evidence="1">
    <location>
        <position position="134"/>
    </location>
</feature>
<feature type="modified residue" description="Phosphoserine" evidence="1">
    <location>
        <position position="135"/>
    </location>
</feature>
<feature type="modified residue" description="Phosphoserine" evidence="11 12">
    <location>
        <position position="138"/>
    </location>
</feature>
<feature type="modified residue" description="Phosphothreonine" evidence="1">
    <location>
        <position position="314"/>
    </location>
</feature>
<feature type="modified residue" description="Phosphoserine" evidence="2">
    <location>
        <position position="316"/>
    </location>
</feature>
<feature type="modified residue" description="Phosphoserine" evidence="11">
    <location>
        <position position="320"/>
    </location>
</feature>
<feature type="modified residue" description="Phosphoserine" evidence="11">
    <location>
        <position position="323"/>
    </location>
</feature>
<feature type="modified residue" description="Phosphoserine" evidence="11">
    <location>
        <position position="325"/>
    </location>
</feature>
<feature type="glycosylation site" id="CAR_000061" description="N-linked (GlcNAc...) asparagine" evidence="6 7 10 11">
    <location>
        <position position="99"/>
    </location>
</feature>
<feature type="glycosylation site" id="CAR_000062" description="N-linked (GlcNAc...) asparagine" evidence="6 7 10 11">
    <location>
        <position position="156"/>
    </location>
</feature>
<feature type="glycosylation site" id="CAR_000063" description="N-linked (GlcNAc...) asparagine" evidence="6 7 10 11">
    <location>
        <position position="176"/>
    </location>
</feature>
<feature type="glycosylation site" description="O-linked (GalNAc...) serine" evidence="11 12 14">
    <location>
        <position position="271"/>
    </location>
</feature>
<feature type="glycosylation site" description="O-linked (GalNAc...) threonine" evidence="11 12 14">
    <location>
        <position position="280"/>
    </location>
</feature>
<feature type="glycosylation site" description="O-linked (GalNAc...) serine" evidence="11 12 14">
    <location>
        <position position="282"/>
    </location>
</feature>
<feature type="glycosylation site" description="O-linked (GalNAc...) serine" evidence="8 11 12">
    <location>
        <position position="296"/>
    </location>
</feature>
<feature type="glycosylation site" description="O-linked (GalNAc...) threonine" evidence="8">
    <location>
        <position position="334"/>
    </location>
</feature>
<feature type="glycosylation site" description="O-linked (GalNAc...) serine; partial" evidence="8 11 12 14">
    <location>
        <position position="341"/>
    </location>
</feature>
<feature type="disulfide bond" evidence="4">
    <location>
        <begin position="32"/>
        <end position="350"/>
    </location>
</feature>
<feature type="disulfide bond" evidence="4">
    <location>
        <begin position="89"/>
        <end position="100"/>
    </location>
</feature>
<feature type="disulfide bond" evidence="4">
    <location>
        <begin position="114"/>
        <end position="132"/>
    </location>
</feature>
<feature type="disulfide bond" evidence="4">
    <location>
        <begin position="146"/>
        <end position="149"/>
    </location>
</feature>
<feature type="disulfide bond" evidence="4">
    <location>
        <begin position="208"/>
        <end position="219"/>
    </location>
</feature>
<feature type="disulfide bond" evidence="4">
    <location>
        <begin position="230"/>
        <end position="248"/>
    </location>
</feature>
<feature type="sequence conflict" description="In Ref. 4; AA sequence." evidence="15" ref="4">
    <original>KH</original>
    <variation>VK</variation>
    <location>
        <begin position="57"/>
        <end position="58"/>
    </location>
</feature>
<feature type="sequence conflict" description="In Ref. 3; AA sequence." evidence="15" ref="3">
    <original>R</original>
    <variation>Q</variation>
    <location>
        <position position="72"/>
    </location>
</feature>
<feature type="sequence conflict" description="In Ref. 3; AA sequence." evidence="15" ref="3">
    <original>T</original>
    <variation>H</variation>
    <location>
        <position position="106"/>
    </location>
</feature>
<feature type="sequence conflict" description="In Ref. 3; AA sequence." evidence="15" ref="3">
    <original>IHVLKQ</original>
    <variation>FSVVKL</variation>
    <location>
        <begin position="116"/>
        <end position="121"/>
    </location>
</feature>
<feature type="sequence conflict" description="In Ref. 5; AA sequence." evidence="15" ref="5">
    <original>S</original>
    <variation>R</variation>
    <location>
        <position position="186"/>
    </location>
</feature>
<feature type="sequence conflict" description="In Ref. 3; AA sequence." evidence="15" ref="3">
    <original>V</original>
    <variation>P</variation>
    <location>
        <position position="195"/>
    </location>
</feature>
<protein>
    <recommendedName>
        <fullName>Alpha-2-HS-glycoprotein</fullName>
    </recommendedName>
    <alternativeName>
        <fullName>Asialofetuin</fullName>
    </alternativeName>
    <alternativeName>
        <fullName>Fetuin-A</fullName>
    </alternativeName>
</protein>